<proteinExistence type="evidence at protein level"/>
<name>ALLC_CHLRE</name>
<reference key="1">
    <citation type="journal article" date="2008" name="Plant Cell Physiol.">
        <title>Characterization of novel genes induced by sexual adhesion and gamete fusion and of their transcriptional regulation in Chlamydomonas reinhardtii.</title>
        <authorList>
            <person name="Kubo T."/>
            <person name="Abe J."/>
            <person name="Oyamada T."/>
            <person name="Ohnishi M."/>
            <person name="Fukuzawa H."/>
            <person name="Matsuda Y."/>
            <person name="Saito T."/>
        </authorList>
    </citation>
    <scope>NUCLEOTIDE SEQUENCE [MRNA]</scope>
    <scope>DEVELOPMENTAL STAGE</scope>
    <scope>TISSUE SPECIFICITY</scope>
</reference>
<reference key="2">
    <citation type="journal article" date="2007" name="Science">
        <title>The Chlamydomonas genome reveals the evolution of key animal and plant functions.</title>
        <authorList>
            <person name="Merchant S.S."/>
            <person name="Prochnik S.E."/>
            <person name="Vallon O."/>
            <person name="Harris E.H."/>
            <person name="Karpowicz S.J."/>
            <person name="Witman G.B."/>
            <person name="Terry A."/>
            <person name="Salamov A."/>
            <person name="Fritz-Laylin L.K."/>
            <person name="Marechal-Drouard L."/>
            <person name="Marshall W.F."/>
            <person name="Qu L.H."/>
            <person name="Nelson D.R."/>
            <person name="Sanderfoot A.A."/>
            <person name="Spalding M.H."/>
            <person name="Kapitonov V.V."/>
            <person name="Ren Q."/>
            <person name="Ferris P."/>
            <person name="Lindquist E."/>
            <person name="Shapiro H."/>
            <person name="Lucas S.M."/>
            <person name="Grimwood J."/>
            <person name="Schmutz J."/>
            <person name="Cardol P."/>
            <person name="Cerutti H."/>
            <person name="Chanfreau G."/>
            <person name="Chen C.L."/>
            <person name="Cognat V."/>
            <person name="Croft M.T."/>
            <person name="Dent R."/>
            <person name="Dutcher S."/>
            <person name="Fernandez E."/>
            <person name="Fukuzawa H."/>
            <person name="Gonzalez-Ballester D."/>
            <person name="Gonzalez-Halphen D."/>
            <person name="Hallmann A."/>
            <person name="Hanikenne M."/>
            <person name="Hippler M."/>
            <person name="Inwood W."/>
            <person name="Jabbari K."/>
            <person name="Kalanon M."/>
            <person name="Kuras R."/>
            <person name="Lefebvre P.A."/>
            <person name="Lemaire S.D."/>
            <person name="Lobanov A.V."/>
            <person name="Lohr M."/>
            <person name="Manuell A."/>
            <person name="Meier I."/>
            <person name="Mets L."/>
            <person name="Mittag M."/>
            <person name="Mittelmeier T."/>
            <person name="Moroney J.V."/>
            <person name="Moseley J."/>
            <person name="Napoli C."/>
            <person name="Nedelcu A.M."/>
            <person name="Niyogi K."/>
            <person name="Novoselov S.V."/>
            <person name="Paulsen I.T."/>
            <person name="Pazour G.J."/>
            <person name="Purton S."/>
            <person name="Ral J.P."/>
            <person name="Riano-Pachon D.M."/>
            <person name="Riekhof W."/>
            <person name="Rymarquis L."/>
            <person name="Schroda M."/>
            <person name="Stern D."/>
            <person name="Umen J."/>
            <person name="Willows R."/>
            <person name="Wilson N."/>
            <person name="Zimmer S.L."/>
            <person name="Allmer J."/>
            <person name="Balk J."/>
            <person name="Bisova K."/>
            <person name="Chen C.J."/>
            <person name="Elias M."/>
            <person name="Gendler K."/>
            <person name="Hauser C."/>
            <person name="Lamb M.R."/>
            <person name="Ledford H."/>
            <person name="Long J.C."/>
            <person name="Minagawa J."/>
            <person name="Page M.D."/>
            <person name="Pan J."/>
            <person name="Pootakham W."/>
            <person name="Roje S."/>
            <person name="Rose A."/>
            <person name="Stahlberg E."/>
            <person name="Terauchi A.M."/>
            <person name="Yang P."/>
            <person name="Ball S."/>
            <person name="Bowler C."/>
            <person name="Dieckmann C.L."/>
            <person name="Gladyshev V.N."/>
            <person name="Green P."/>
            <person name="Jorgensen R."/>
            <person name="Mayfield S."/>
            <person name="Mueller-Roeber B."/>
            <person name="Rajamani S."/>
            <person name="Sayre R.T."/>
            <person name="Brokstein P."/>
            <person name="Dubchak I."/>
            <person name="Goodstein D."/>
            <person name="Hornick L."/>
            <person name="Huang Y.W."/>
            <person name="Jhaveri J."/>
            <person name="Luo Y."/>
            <person name="Martinez D."/>
            <person name="Ngau W.C."/>
            <person name="Otillar B."/>
            <person name="Poliakov A."/>
            <person name="Porter A."/>
            <person name="Szajkowski L."/>
            <person name="Werner G."/>
            <person name="Zhou K."/>
            <person name="Grigoriev I.V."/>
            <person name="Rokhsar D.S."/>
            <person name="Grossman A.R."/>
        </authorList>
    </citation>
    <scope>NUCLEOTIDE SEQUENCE [LARGE SCALE GENOMIC DNA]</scope>
    <source>
        <strain>CC-503</strain>
    </source>
</reference>
<reference key="3">
    <citation type="journal article" date="2000" name="Arch. Biochem. Biophys.">
        <title>Allantoate amidinohydrolase (Allantoicase) from Chlamydomonas reinhardtii: its purification and catalytic and molecular characterization.</title>
        <authorList>
            <person name="Piedras P."/>
            <person name="Munoz A."/>
            <person name="Aguilar M."/>
            <person name="Pineda M."/>
        </authorList>
    </citation>
    <scope>PROTEIN SEQUENCE OF 80-88</scope>
    <scope>FUNCTION</scope>
    <scope>BIOPHYSICOCHEMICAL PROPERTIES</scope>
    <scope>CATALYTIC ACTIVITY</scope>
    <scope>PATHWAY</scope>
    <scope>SUBUNIT</scope>
    <source>
        <strain>6145C</strain>
    </source>
</reference>
<sequence length="162" mass="17207">MASTSHNPFYAAMQPQAQHWGATSPTSTGAGYDRPSAGYPAYTGYAAAGTSHPAPSSSSPSTALALYNPSSLYGLYYNEAVHGPFATGLQSNPFTPGLAPLSTVSRPSYATEDPLRQRYPATSANPHDPLNWITEDLFAIRMERAAISQQRTPLRSASVAAR</sequence>
<comment type="function">
    <text evidence="1">Catalyzes the degradation of allantoate to (-)-ureidoglycolate and (+)-ureidoglycolate to glyoxylate.</text>
</comment>
<comment type="catalytic activity">
    <reaction evidence="1">
        <text>allantoate + H2O = (S)-ureidoglycolate + urea</text>
        <dbReference type="Rhea" id="RHEA:11016"/>
        <dbReference type="ChEBI" id="CHEBI:15377"/>
        <dbReference type="ChEBI" id="CHEBI:16199"/>
        <dbReference type="ChEBI" id="CHEBI:17536"/>
        <dbReference type="ChEBI" id="CHEBI:57296"/>
        <dbReference type="EC" id="3.5.3.4"/>
    </reaction>
</comment>
<comment type="biophysicochemical properties">
    <kinetics>
        <KM evidence="1">2 mM for allantoate</KM>
        <KM evidence="1">0.7 mM for ureidoglycolate</KM>
        <text evidence="1">Vmax of the reaction with allantoate as substrate is nine times higher than that with ureidoglycolate.</text>
    </kinetics>
    <phDependence>
        <text evidence="1">Optimum pH is 6.5 with allantoate as substrate, and 8 with ureidoglycolate as substrate.</text>
    </phDependence>
    <temperatureDependence>
        <text evidence="1">Optimum temperature is 60 degrees Celsius.</text>
    </temperatureDependence>
</comment>
<comment type="pathway">
    <text evidence="1">Nitrogen metabolism; (S)-allantoin degradation; (S)-ureidoglycolate from allantoate (aminidohydrolase route): step 1/1.</text>
</comment>
<comment type="subunit">
    <text evidence="1">Homohexamer.</text>
</comment>
<comment type="tissue specificity">
    <text evidence="2">Expressed in zygote.</text>
</comment>
<comment type="developmental stage">
    <text evidence="2">Expressed in the mating reaction and during early zygote formation.</text>
</comment>
<comment type="similarity">
    <text evidence="5">Belongs to the allantoicase family.</text>
</comment>
<comment type="sequence caution" evidence="5">
    <conflict type="erroneous gene model prediction">
        <sequence resource="EMBL-CDS" id="PNW76956"/>
    </conflict>
</comment>
<evidence type="ECO:0000269" key="1">
    <source>
    </source>
</evidence>
<evidence type="ECO:0000269" key="2">
    <source>
    </source>
</evidence>
<evidence type="ECO:0000303" key="3">
    <source>
    </source>
</evidence>
<evidence type="ECO:0000303" key="4">
    <source>
    </source>
</evidence>
<evidence type="ECO:0000305" key="5"/>
<evidence type="ECO:0000312" key="6">
    <source>
        <dbReference type="EMBL" id="EDP00347.1"/>
    </source>
</evidence>
<evidence type="ECO:0000312" key="7">
    <source>
        <dbReference type="EMBL" id="PNW76956.1"/>
    </source>
</evidence>
<keyword id="KW-0903">Direct protein sequencing</keyword>
<keyword id="KW-0378">Hydrolase</keyword>
<keyword id="KW-0659">Purine metabolism</keyword>
<keyword id="KW-1185">Reference proteome</keyword>
<accession>P82678</accession>
<accession>A0A2K3D8W0</accession>
<accession>A2PZB4</accession>
<feature type="chain" id="PRO_0000205915" description="Allantoicase">
    <location>
        <begin position="1"/>
        <end position="162"/>
    </location>
</feature>
<feature type="sequence conflict" description="In Ref. 3; AA sequence." evidence="5" ref="3">
    <original>P</original>
    <variation>Q</variation>
    <location>
        <position position="84"/>
    </location>
</feature>
<feature type="sequence conflict" description="In Ref. 3; AA sequence." evidence="5" ref="3">
    <original>G</original>
    <variation>L</variation>
    <location>
        <position position="88"/>
    </location>
</feature>
<organism>
    <name type="scientific">Chlamydomonas reinhardtii</name>
    <name type="common">Chlamydomonas smithii</name>
    <dbReference type="NCBI Taxonomy" id="3055"/>
    <lineage>
        <taxon>Eukaryota</taxon>
        <taxon>Viridiplantae</taxon>
        <taxon>Chlorophyta</taxon>
        <taxon>core chlorophytes</taxon>
        <taxon>Chlorophyceae</taxon>
        <taxon>CS clade</taxon>
        <taxon>Chlamydomonadales</taxon>
        <taxon>Chlamydomonadaceae</taxon>
        <taxon>Chlamydomonas</taxon>
    </lineage>
</organism>
<protein>
    <recommendedName>
        <fullName evidence="3">Allantoicase</fullName>
        <ecNumber evidence="1">3.5.3.4</ecNumber>
    </recommendedName>
    <alternativeName>
        <fullName evidence="3">Allantoate amidinohydrolase</fullName>
    </alternativeName>
    <alternativeName>
        <fullName evidence="4">Protein EARLY ZYGOTE EXPRESSED 3</fullName>
    </alternativeName>
</protein>
<dbReference type="EC" id="3.5.3.4" evidence="1"/>
<dbReference type="EMBL" id="AB267730">
    <property type="protein sequence ID" value="BAF46276.1"/>
    <property type="molecule type" value="mRNA"/>
</dbReference>
<dbReference type="EMBL" id="DS496140">
    <property type="protein sequence ID" value="EDP00347.1"/>
    <property type="molecule type" value="Genomic_DNA"/>
</dbReference>
<dbReference type="EMBL" id="CM008972">
    <property type="protein sequence ID" value="PNW76956.1"/>
    <property type="status" value="ALT_SEQ"/>
    <property type="molecule type" value="Genomic_DNA"/>
</dbReference>
<dbReference type="RefSeq" id="XP_001697407.1">
    <property type="nucleotide sequence ID" value="XM_001697355.1"/>
</dbReference>
<dbReference type="PaxDb" id="3055-EDP00347"/>
<dbReference type="HOGENOM" id="CLU_1637821_0_0_1"/>
<dbReference type="InParanoid" id="P82678"/>
<dbReference type="OrthoDB" id="542657at2759"/>
<dbReference type="BioCyc" id="MetaCyc:MONOMER-13513"/>
<dbReference type="SABIO-RK" id="P82678"/>
<dbReference type="UniPathway" id="UPA00395">
    <property type="reaction ID" value="UER00654"/>
</dbReference>
<dbReference type="Proteomes" id="UP000006906">
    <property type="component" value="Chromosome 11"/>
</dbReference>
<dbReference type="GO" id="GO:0004037">
    <property type="term" value="F:allantoicase activity"/>
    <property type="evidence" value="ECO:0000314"/>
    <property type="project" value="UniProtKB"/>
</dbReference>
<dbReference type="GO" id="GO:0000256">
    <property type="term" value="P:allantoin catabolic process"/>
    <property type="evidence" value="ECO:0000314"/>
    <property type="project" value="UniProtKB"/>
</dbReference>
<dbReference type="GO" id="GO:0006144">
    <property type="term" value="P:purine nucleobase metabolic process"/>
    <property type="evidence" value="ECO:0007669"/>
    <property type="project" value="UniProtKB-KW"/>
</dbReference>
<gene>
    <name evidence="4" type="primary">EZY3</name>
    <name evidence="7" type="ORF">CHLRE_11g482650v5</name>
    <name evidence="6" type="ORF">CHLREDRAFT_192916</name>
</gene>